<organism>
    <name type="scientific">Bacillus cereus (strain AH187)</name>
    <dbReference type="NCBI Taxonomy" id="405534"/>
    <lineage>
        <taxon>Bacteria</taxon>
        <taxon>Bacillati</taxon>
        <taxon>Bacillota</taxon>
        <taxon>Bacilli</taxon>
        <taxon>Bacillales</taxon>
        <taxon>Bacillaceae</taxon>
        <taxon>Bacillus</taxon>
        <taxon>Bacillus cereus group</taxon>
    </lineage>
</organism>
<gene>
    <name type="ordered locus">BCAH187_A3426</name>
</gene>
<name>Y3426_BACC7</name>
<feature type="chain" id="PRO_1000198316" description="UPF0303 protein BCAH187_A3426">
    <location>
        <begin position="1"/>
        <end position="158"/>
    </location>
</feature>
<proteinExistence type="inferred from homology"/>
<evidence type="ECO:0000255" key="1">
    <source>
        <dbReference type="HAMAP-Rule" id="MF_00761"/>
    </source>
</evidence>
<dbReference type="EMBL" id="CP001177">
    <property type="protein sequence ID" value="ACJ78456.1"/>
    <property type="molecule type" value="Genomic_DNA"/>
</dbReference>
<dbReference type="SMR" id="B7HYY0"/>
<dbReference type="KEGG" id="bcr:BCAH187_A3426"/>
<dbReference type="HOGENOM" id="CLU_101036_2_0_9"/>
<dbReference type="Proteomes" id="UP000002214">
    <property type="component" value="Chromosome"/>
</dbReference>
<dbReference type="FunFam" id="3.30.450.150:FF:000002">
    <property type="entry name" value="UPF0303 protein BCAH820_3413"/>
    <property type="match status" value="1"/>
</dbReference>
<dbReference type="Gene3D" id="3.30.450.150">
    <property type="entry name" value="Haem-degrading domain"/>
    <property type="match status" value="1"/>
</dbReference>
<dbReference type="HAMAP" id="MF_00761">
    <property type="entry name" value="UPF0303"/>
    <property type="match status" value="1"/>
</dbReference>
<dbReference type="InterPro" id="IPR005624">
    <property type="entry name" value="PduO/GlcC-like"/>
</dbReference>
<dbReference type="InterPro" id="IPR038084">
    <property type="entry name" value="PduO/GlcC-like_sf"/>
</dbReference>
<dbReference type="InterPro" id="IPR010371">
    <property type="entry name" value="YBR137W-like"/>
</dbReference>
<dbReference type="NCBIfam" id="NF002692">
    <property type="entry name" value="PRK02487.1-1"/>
    <property type="match status" value="1"/>
</dbReference>
<dbReference type="NCBIfam" id="NF002696">
    <property type="entry name" value="PRK02487.1-5"/>
    <property type="match status" value="1"/>
</dbReference>
<dbReference type="PANTHER" id="PTHR28255">
    <property type="match status" value="1"/>
</dbReference>
<dbReference type="PANTHER" id="PTHR28255:SF1">
    <property type="entry name" value="UPF0303 PROTEIN YBR137W"/>
    <property type="match status" value="1"/>
</dbReference>
<dbReference type="Pfam" id="PF03928">
    <property type="entry name" value="HbpS-like"/>
    <property type="match status" value="1"/>
</dbReference>
<dbReference type="PIRSF" id="PIRSF008757">
    <property type="entry name" value="UCP008757"/>
    <property type="match status" value="1"/>
</dbReference>
<dbReference type="SUPFAM" id="SSF143744">
    <property type="entry name" value="GlcG-like"/>
    <property type="match status" value="1"/>
</dbReference>
<sequence length="158" mass="17900">MSSSNLNEISKQILKEEETLQFSSFTNEDALQIGLFIVETAKREGKLIAVDITKNGVQLFHFKMTGTNAENTKWIERKKRVVSLHDRSSYYMQIQSEITGISYNEKYLLDTSEYAAFGGCFPIRIKNVGVIGMITVSGLPPEEDHELVVRAVKNHLNQ</sequence>
<accession>B7HYY0</accession>
<protein>
    <recommendedName>
        <fullName evidence="1">UPF0303 protein BCAH187_A3426</fullName>
    </recommendedName>
</protein>
<reference key="1">
    <citation type="submission" date="2008-10" db="EMBL/GenBank/DDBJ databases">
        <title>Genome sequence of Bacillus cereus AH187.</title>
        <authorList>
            <person name="Dodson R.J."/>
            <person name="Durkin A.S."/>
            <person name="Rosovitz M.J."/>
            <person name="Rasko D.A."/>
            <person name="Kolsto A.B."/>
            <person name="Okstad O.A."/>
            <person name="Ravel J."/>
            <person name="Sutton G."/>
        </authorList>
    </citation>
    <scope>NUCLEOTIDE SEQUENCE [LARGE SCALE GENOMIC DNA]</scope>
    <source>
        <strain>AH187</strain>
    </source>
</reference>
<comment type="similarity">
    <text evidence="1">Belongs to the UPF0303 family.</text>
</comment>